<name>SHDD_SEDHY</name>
<keyword id="KW-0002">3D-structure</keyword>
<keyword id="KW-0058">Aromatic hydrocarbons catabolism</keyword>
<keyword id="KW-0216">Detoxification</keyword>
<gene>
    <name evidence="3" type="primary">shdD</name>
</gene>
<organism>
    <name type="scientific">Sedimentibacter hydroxybenzoicus</name>
    <name type="common">Clostridium hydroxybenzoicum</name>
    <dbReference type="NCBI Taxonomy" id="29345"/>
    <lineage>
        <taxon>Bacteria</taxon>
        <taxon>Bacillati</taxon>
        <taxon>Bacillota</taxon>
        <taxon>Tissierellia</taxon>
        <taxon>Sedimentibacter</taxon>
    </lineage>
</organism>
<evidence type="ECO:0000269" key="1">
    <source>
    </source>
</evidence>
<evidence type="ECO:0000269" key="2">
    <source>
    </source>
</evidence>
<evidence type="ECO:0000303" key="3">
    <source>
    </source>
</evidence>
<evidence type="ECO:0000303" key="4">
    <source>
    </source>
</evidence>
<evidence type="ECO:0000305" key="5"/>
<evidence type="ECO:0000305" key="6">
    <source>
    </source>
</evidence>
<evidence type="ECO:0000312" key="7">
    <source>
        <dbReference type="EMBL" id="AAY67851.1"/>
    </source>
</evidence>
<evidence type="ECO:0007829" key="8">
    <source>
        <dbReference type="PDB" id="7AE5"/>
    </source>
</evidence>
<comment type="function">
    <text evidence="1 2">Involved in the non-oxidative decarboxylation and detoxification of phenolic derivatives under anaerobic conditions, however the precise biochemical function of ShdD in metabolism of phenolic acid is unknown.</text>
</comment>
<comment type="induction">
    <text evidence="6">By 4-hydroxybenzoate and 3,4-dihydroxybenzoate.</text>
</comment>
<comment type="miscellaneous">
    <text evidence="5">It is not known, if phenolic acid decarboxylase forms a complex composed of ShdB, ShdC and ShdD. The term subunit is often used in reference to the operon, however there is no experimental evidence to prove the existence of the complex.</text>
</comment>
<accession>Q4R102</accession>
<sequence>MKCHRCGSDNVRKMVDSPVGDAWEVYVCEKCCYSWRSTENPVVMEKFKLDDNKIANMGVIPPIPPLKK</sequence>
<proteinExistence type="evidence at protein level"/>
<dbReference type="EMBL" id="AF128880">
    <property type="protein sequence ID" value="AAY67851.1"/>
    <property type="molecule type" value="Genomic_DNA"/>
</dbReference>
<dbReference type="PDB" id="7AE4">
    <property type="method" value="X-ray"/>
    <property type="resolution" value="3.31 A"/>
    <property type="chains" value="a/b/c/d/e/f=1-68"/>
</dbReference>
<dbReference type="PDB" id="7AE5">
    <property type="method" value="X-ray"/>
    <property type="resolution" value="2.19 A"/>
    <property type="chains" value="a/b/c/d/e/f=1-68"/>
</dbReference>
<dbReference type="PDB" id="7AE7">
    <property type="method" value="X-ray"/>
    <property type="resolution" value="2.66 A"/>
    <property type="chains" value="a/b/c/d/e/f=1-58"/>
</dbReference>
<dbReference type="PDBsum" id="7AE4"/>
<dbReference type="PDBsum" id="7AE5"/>
<dbReference type="PDBsum" id="7AE7"/>
<dbReference type="SMR" id="Q4R102"/>
<dbReference type="BRENDA" id="4.1.1.61">
    <property type="organism ID" value="5658"/>
</dbReference>
<dbReference type="GO" id="GO:0009056">
    <property type="term" value="P:catabolic process"/>
    <property type="evidence" value="ECO:0007669"/>
    <property type="project" value="UniProtKB-KW"/>
</dbReference>
<dbReference type="GO" id="GO:0009636">
    <property type="term" value="P:response to toxic substance"/>
    <property type="evidence" value="ECO:0007669"/>
    <property type="project" value="UniProtKB-KW"/>
</dbReference>
<dbReference type="InterPro" id="IPR047707">
    <property type="entry name" value="VdcD-like"/>
</dbReference>
<dbReference type="NCBIfam" id="NF041205">
    <property type="entry name" value="VdcD"/>
    <property type="match status" value="1"/>
</dbReference>
<protein>
    <recommendedName>
        <fullName evidence="6">Protein ShdD</fullName>
    </recommendedName>
    <alternativeName>
        <fullName evidence="4">Phenolic acid decarboxylase subunit D</fullName>
        <shortName evidence="4">PAD</shortName>
    </alternativeName>
</protein>
<feature type="chain" id="PRO_0000444038" description="Protein ShdD">
    <location>
        <begin position="1"/>
        <end position="68"/>
    </location>
</feature>
<feature type="turn" evidence="8">
    <location>
        <begin position="4"/>
        <end position="6"/>
    </location>
</feature>
<feature type="strand" evidence="8">
    <location>
        <begin position="11"/>
        <end position="16"/>
    </location>
</feature>
<feature type="strand" evidence="8">
    <location>
        <begin position="24"/>
        <end position="28"/>
    </location>
</feature>
<feature type="turn" evidence="8">
    <location>
        <begin position="29"/>
        <end position="31"/>
    </location>
</feature>
<feature type="strand" evidence="8">
    <location>
        <begin position="34"/>
        <end position="36"/>
    </location>
</feature>
<feature type="helix" evidence="8">
    <location>
        <begin position="45"/>
        <end position="47"/>
    </location>
</feature>
<feature type="helix" evidence="8">
    <location>
        <begin position="51"/>
        <end position="55"/>
    </location>
</feature>
<feature type="strand" evidence="8">
    <location>
        <begin position="59"/>
        <end position="61"/>
    </location>
</feature>
<reference key="1">
    <citation type="journal article" date="1995" name="Eur. J. Biochem.">
        <title>Purification and characterization of an oxygen-sensitive reversible 4-hydroxybenzoate decarboxylase from Clostridium hydroxybenzoicum.</title>
        <authorList>
            <person name="He Z."/>
            <person name="Wiegel J."/>
        </authorList>
    </citation>
    <scope>NUCLEOTIDE SEQUENCE [GENOMIC DNA]</scope>
    <source>
        <strain evidence="7">ATCC 51151 / DSM 7310 / JW/Z-1</strain>
    </source>
</reference>
<reference key="2">
    <citation type="journal article" date="1999" name="J. Bacteriol.">
        <title>Cloning, characterization, and expression of a novel gene encoding a reversible 4-hydroxybenzoate decarboxylase from Clostridium hydroxybenzoicum.</title>
        <authorList>
            <person name="Huang J."/>
            <person name="He Z."/>
            <person name="Wiegel J."/>
        </authorList>
    </citation>
    <scope>NUCLEOTIDE SEQUENCE [GENOMIC DNA]</scope>
    <source>
        <strain evidence="7">ATCC 51151 / DSM 7310 / JW/Z-1</strain>
    </source>
</reference>
<reference key="3">
    <citation type="journal article" date="2002" name="Int. J. Syst. Evol. Microbiol.">
        <title>Reclassification of Clostridium hydroxybenzoicum as Sedimentibacter hydroxybenzoicus gen. nov., comb. nov., and description of Sedimentibacter saalensis sp. nov..</title>
        <authorList>
            <person name="Breitenstein A."/>
            <person name="Wiegel J."/>
            <person name="Haertig C."/>
            <person name="Weiss N."/>
            <person name="Andreesen J.R."/>
            <person name="Lechner U."/>
        </authorList>
    </citation>
    <scope>NUCLEOTIDE SEQUENCE [GENOMIC DNA]</scope>
    <source>
        <strain evidence="7">ATCC 51151 / DSM 7310 / JW/Z-1</strain>
    </source>
</reference>
<reference key="4">
    <citation type="journal article" date="2005" name="Genomics">
        <title>Distribution of genes encoding the microbial non-oxidative reversible hydroxyarylic acid decarboxylases/phenol carboxylases.</title>
        <authorList>
            <person name="Lupa B."/>
            <person name="Lyon D."/>
            <person name="Gibbs M.D."/>
            <person name="Reeves R.A."/>
            <person name="Wiegel J."/>
        </authorList>
    </citation>
    <scope>NUCLEOTIDE SEQUENCE [GENOMIC DNA]</scope>
    <scope>FUNCTION</scope>
    <source>
        <strain evidence="7">ATCC 51151 / DSM 7310 / JW/Z-1</strain>
    </source>
</reference>
<reference key="5">
    <citation type="journal article" date="1990" name="Microb. Ecol.">
        <title>Isolation and partial characterization of a Clostridium species transforming para-hydroxybenzoate and 3,4-dihydroxybenzoate and producing phenols as the final transformation products.</title>
        <authorList>
            <person name="Zhang X."/>
            <person name="Wiegel J."/>
        </authorList>
    </citation>
    <scope>FUNCTION</scope>
    <scope>INDUCTION</scope>
    <source>
        <strain>ATCC 51151 / DSM 7310 / JW/Z-1</strain>
    </source>
</reference>